<comment type="function">
    <text evidence="1">Catalyzes the condensation of (S)-aspartate-beta-semialdehyde [(S)-ASA] and pyruvate to 4-hydroxy-tetrahydrodipicolinate (HTPA).</text>
</comment>
<comment type="catalytic activity">
    <reaction evidence="1">
        <text>L-aspartate 4-semialdehyde + pyruvate = (2S,4S)-4-hydroxy-2,3,4,5-tetrahydrodipicolinate + H2O + H(+)</text>
        <dbReference type="Rhea" id="RHEA:34171"/>
        <dbReference type="ChEBI" id="CHEBI:15361"/>
        <dbReference type="ChEBI" id="CHEBI:15377"/>
        <dbReference type="ChEBI" id="CHEBI:15378"/>
        <dbReference type="ChEBI" id="CHEBI:67139"/>
        <dbReference type="ChEBI" id="CHEBI:537519"/>
        <dbReference type="EC" id="4.3.3.7"/>
    </reaction>
</comment>
<comment type="pathway">
    <text evidence="1">Amino-acid biosynthesis; L-lysine biosynthesis via DAP pathway; (S)-tetrahydrodipicolinate from L-aspartate: step 3/4.</text>
</comment>
<comment type="subunit">
    <text evidence="1">Homodimer.</text>
</comment>
<comment type="subcellular location">
    <subcellularLocation>
        <location evidence="1">Cytoplasm</location>
    </subcellularLocation>
</comment>
<comment type="similarity">
    <text evidence="1">Belongs to the DapA family.</text>
</comment>
<comment type="caution">
    <text evidence="2">Was originally thought to be a dihydrodipicolinate synthase (DHDPS), catalyzing the condensation of (S)-aspartate-beta-semialdehyde [(S)-ASA] and pyruvate to dihydrodipicolinate (DHDP). However, it was shown in E.coli that the product of the enzymatic reaction is not dihydrodipicolinate but in fact (4S)-4-hydroxy-2,3,4,5-tetrahydro-(2S)-dipicolinic acid (HTPA), and that the consecutive dehydration reaction leading to DHDP is not spontaneous but catalyzed by DapB.</text>
</comment>
<accession>Q4ZW75</accession>
<evidence type="ECO:0000255" key="1">
    <source>
        <dbReference type="HAMAP-Rule" id="MF_00418"/>
    </source>
</evidence>
<evidence type="ECO:0000305" key="2"/>
<reference key="1">
    <citation type="journal article" date="2005" name="Proc. Natl. Acad. Sci. U.S.A.">
        <title>Comparison of the complete genome sequences of Pseudomonas syringae pv. syringae B728a and pv. tomato DC3000.</title>
        <authorList>
            <person name="Feil H."/>
            <person name="Feil W.S."/>
            <person name="Chain P."/>
            <person name="Larimer F."/>
            <person name="Dibartolo G."/>
            <person name="Copeland A."/>
            <person name="Lykidis A."/>
            <person name="Trong S."/>
            <person name="Nolan M."/>
            <person name="Goltsman E."/>
            <person name="Thiel J."/>
            <person name="Malfatti S."/>
            <person name="Loper J.E."/>
            <person name="Lapidus A."/>
            <person name="Detter J.C."/>
            <person name="Land M."/>
            <person name="Richardson P.M."/>
            <person name="Kyrpides N.C."/>
            <person name="Ivanova N."/>
            <person name="Lindow S.E."/>
        </authorList>
    </citation>
    <scope>NUCLEOTIDE SEQUENCE [LARGE SCALE GENOMIC DNA]</scope>
    <source>
        <strain>B728a</strain>
    </source>
</reference>
<name>DAPA_PSEU2</name>
<sequence>MIAGSMVALVTPMDAQGRLDWDSLSKLVDFHLQEGTHAIVAVGTTGESATLDVNEHIEVIRRVVTQVAGRIPVIAGTGANSTREAVELTTNAKNAGADACLLVTPYYNKPTQEGLFQHFSHIANAVDIPQILYNVPGRTACDMLPETVARLSTVKNIVGIKEATGNLQRAKDILASVSSDFLVYSGDDATAVELMLLGGKGNISVTANVAPRAMSDLCAAAMRGDAQTARAIHEKLMPLNNTLFIESNPIPVKWALHEMGLMPDGIRLPLTWLSEACHEPLRQAMRQSGVLV</sequence>
<protein>
    <recommendedName>
        <fullName evidence="1">4-hydroxy-tetrahydrodipicolinate synthase</fullName>
        <shortName evidence="1">HTPA synthase</shortName>
        <ecNumber evidence="1">4.3.3.7</ecNumber>
    </recommendedName>
</protein>
<gene>
    <name evidence="1" type="primary">dapA</name>
    <name type="ordered locus">Psyr_1548</name>
</gene>
<feature type="chain" id="PRO_1000050249" description="4-hydroxy-tetrahydrodipicolinate synthase">
    <location>
        <begin position="1"/>
        <end position="292"/>
    </location>
</feature>
<feature type="active site" description="Proton donor/acceptor" evidence="1">
    <location>
        <position position="133"/>
    </location>
</feature>
<feature type="active site" description="Schiff-base intermediate with substrate" evidence="1">
    <location>
        <position position="161"/>
    </location>
</feature>
<feature type="binding site" evidence="1">
    <location>
        <position position="45"/>
    </location>
    <ligand>
        <name>pyruvate</name>
        <dbReference type="ChEBI" id="CHEBI:15361"/>
    </ligand>
</feature>
<feature type="binding site" evidence="1">
    <location>
        <position position="203"/>
    </location>
    <ligand>
        <name>pyruvate</name>
        <dbReference type="ChEBI" id="CHEBI:15361"/>
    </ligand>
</feature>
<feature type="site" description="Part of a proton relay during catalysis" evidence="1">
    <location>
        <position position="44"/>
    </location>
</feature>
<feature type="site" description="Part of a proton relay during catalysis" evidence="1">
    <location>
        <position position="107"/>
    </location>
</feature>
<keyword id="KW-0028">Amino-acid biosynthesis</keyword>
<keyword id="KW-0963">Cytoplasm</keyword>
<keyword id="KW-0220">Diaminopimelate biosynthesis</keyword>
<keyword id="KW-0456">Lyase</keyword>
<keyword id="KW-0457">Lysine biosynthesis</keyword>
<keyword id="KW-0704">Schiff base</keyword>
<dbReference type="EC" id="4.3.3.7" evidence="1"/>
<dbReference type="EMBL" id="CP000075">
    <property type="protein sequence ID" value="AAY36597.1"/>
    <property type="molecule type" value="Genomic_DNA"/>
</dbReference>
<dbReference type="RefSeq" id="WP_003317384.1">
    <property type="nucleotide sequence ID" value="NC_007005.1"/>
</dbReference>
<dbReference type="RefSeq" id="YP_234635.1">
    <property type="nucleotide sequence ID" value="NC_007005.1"/>
</dbReference>
<dbReference type="SMR" id="Q4ZW75"/>
<dbReference type="STRING" id="205918.Psyr_1548"/>
<dbReference type="GeneID" id="77277389"/>
<dbReference type="KEGG" id="psb:Psyr_1548"/>
<dbReference type="PATRIC" id="fig|205918.7.peg.1583"/>
<dbReference type="eggNOG" id="COG0329">
    <property type="taxonomic scope" value="Bacteria"/>
</dbReference>
<dbReference type="HOGENOM" id="CLU_049343_7_1_6"/>
<dbReference type="OrthoDB" id="9782828at2"/>
<dbReference type="UniPathway" id="UPA00034">
    <property type="reaction ID" value="UER00017"/>
</dbReference>
<dbReference type="Proteomes" id="UP000000426">
    <property type="component" value="Chromosome"/>
</dbReference>
<dbReference type="GO" id="GO:0005829">
    <property type="term" value="C:cytosol"/>
    <property type="evidence" value="ECO:0007669"/>
    <property type="project" value="TreeGrafter"/>
</dbReference>
<dbReference type="GO" id="GO:0008840">
    <property type="term" value="F:4-hydroxy-tetrahydrodipicolinate synthase activity"/>
    <property type="evidence" value="ECO:0007669"/>
    <property type="project" value="UniProtKB-UniRule"/>
</dbReference>
<dbReference type="GO" id="GO:0019877">
    <property type="term" value="P:diaminopimelate biosynthetic process"/>
    <property type="evidence" value="ECO:0007669"/>
    <property type="project" value="UniProtKB-UniRule"/>
</dbReference>
<dbReference type="GO" id="GO:0009089">
    <property type="term" value="P:lysine biosynthetic process via diaminopimelate"/>
    <property type="evidence" value="ECO:0007669"/>
    <property type="project" value="UniProtKB-UniRule"/>
</dbReference>
<dbReference type="CDD" id="cd00950">
    <property type="entry name" value="DHDPS"/>
    <property type="match status" value="1"/>
</dbReference>
<dbReference type="Gene3D" id="3.20.20.70">
    <property type="entry name" value="Aldolase class I"/>
    <property type="match status" value="1"/>
</dbReference>
<dbReference type="HAMAP" id="MF_00418">
    <property type="entry name" value="DapA"/>
    <property type="match status" value="1"/>
</dbReference>
<dbReference type="InterPro" id="IPR013785">
    <property type="entry name" value="Aldolase_TIM"/>
</dbReference>
<dbReference type="InterPro" id="IPR005263">
    <property type="entry name" value="DapA"/>
</dbReference>
<dbReference type="InterPro" id="IPR002220">
    <property type="entry name" value="DapA-like"/>
</dbReference>
<dbReference type="InterPro" id="IPR020625">
    <property type="entry name" value="Schiff_base-form_aldolases_AS"/>
</dbReference>
<dbReference type="InterPro" id="IPR020624">
    <property type="entry name" value="Schiff_base-form_aldolases_CS"/>
</dbReference>
<dbReference type="NCBIfam" id="TIGR00674">
    <property type="entry name" value="dapA"/>
    <property type="match status" value="1"/>
</dbReference>
<dbReference type="PANTHER" id="PTHR12128:SF66">
    <property type="entry name" value="4-HYDROXY-2-OXOGLUTARATE ALDOLASE, MITOCHONDRIAL"/>
    <property type="match status" value="1"/>
</dbReference>
<dbReference type="PANTHER" id="PTHR12128">
    <property type="entry name" value="DIHYDRODIPICOLINATE SYNTHASE"/>
    <property type="match status" value="1"/>
</dbReference>
<dbReference type="Pfam" id="PF00701">
    <property type="entry name" value="DHDPS"/>
    <property type="match status" value="1"/>
</dbReference>
<dbReference type="PIRSF" id="PIRSF001365">
    <property type="entry name" value="DHDPS"/>
    <property type="match status" value="1"/>
</dbReference>
<dbReference type="PRINTS" id="PR00146">
    <property type="entry name" value="DHPICSNTHASE"/>
</dbReference>
<dbReference type="SMART" id="SM01130">
    <property type="entry name" value="DHDPS"/>
    <property type="match status" value="1"/>
</dbReference>
<dbReference type="SUPFAM" id="SSF51569">
    <property type="entry name" value="Aldolase"/>
    <property type="match status" value="1"/>
</dbReference>
<dbReference type="PROSITE" id="PS00665">
    <property type="entry name" value="DHDPS_1"/>
    <property type="match status" value="1"/>
</dbReference>
<dbReference type="PROSITE" id="PS00666">
    <property type="entry name" value="DHDPS_2"/>
    <property type="match status" value="1"/>
</dbReference>
<proteinExistence type="inferred from homology"/>
<organism>
    <name type="scientific">Pseudomonas syringae pv. syringae (strain B728a)</name>
    <dbReference type="NCBI Taxonomy" id="205918"/>
    <lineage>
        <taxon>Bacteria</taxon>
        <taxon>Pseudomonadati</taxon>
        <taxon>Pseudomonadota</taxon>
        <taxon>Gammaproteobacteria</taxon>
        <taxon>Pseudomonadales</taxon>
        <taxon>Pseudomonadaceae</taxon>
        <taxon>Pseudomonas</taxon>
        <taxon>Pseudomonas syringae</taxon>
    </lineage>
</organism>